<sequence>MGKFAKKLERAIRGYTFDDVLLIPQATEVEPKDVDVSTQITPNVKLNIPILSAAMDTVTEWEMAVAMAREGGLGVIHRNMSIEEQVEQVKRVKKAERFIVEDVITISPEETVDFALFLMEKHDIDGLPVVENEKVVGIISKKDIAAREGKLVKELMTKDVITVPENIEVEEALKIMIENRIDRLPVVDKEGRLIGLITMSDLVARKKYKNAVRDENGELLVAAAVSPFDIRRAIELDRAGADVIVVDTAHAHNLKAIKAMKEMRQKVDADFIVGNIANPKAVDDLTFADAVKVGIGPGSICTTRIVAGVGVPQITAIAMVADRAQEYGLYVIADGGIKYSGDIVKAIAAGADAVMLGNLLAGTKEAPGKEVIINGRKYKQYRGMGSLGAMMKGGAERYYQGGYMKTRKFVPEGVEGVVPYRGTVSEVLYQLVGGLKAGMGYVGARNIKELKEKGEFVIITSAGLRESHPHDIIITNEAPNYPLEK</sequence>
<evidence type="ECO:0000255" key="1">
    <source>
        <dbReference type="HAMAP-Rule" id="MF_01964"/>
    </source>
</evidence>
<proteinExistence type="inferred from homology"/>
<feature type="chain" id="PRO_0000093720" description="Inosine-5'-monophosphate dehydrogenase">
    <location>
        <begin position="1"/>
        <end position="485"/>
    </location>
</feature>
<feature type="domain" description="CBS 1" evidence="1">
    <location>
        <begin position="99"/>
        <end position="154"/>
    </location>
</feature>
<feature type="domain" description="CBS 2" evidence="1">
    <location>
        <begin position="156"/>
        <end position="215"/>
    </location>
</feature>
<feature type="active site" description="Thioimidate intermediate" evidence="1">
    <location>
        <position position="301"/>
    </location>
</feature>
<feature type="active site" description="Proton acceptor" evidence="1">
    <location>
        <position position="397"/>
    </location>
</feature>
<feature type="binding site" evidence="1">
    <location>
        <position position="247"/>
    </location>
    <ligand>
        <name>NAD(+)</name>
        <dbReference type="ChEBI" id="CHEBI:57540"/>
    </ligand>
</feature>
<feature type="binding site" evidence="1">
    <location>
        <begin position="294"/>
        <end position="296"/>
    </location>
    <ligand>
        <name>NAD(+)</name>
        <dbReference type="ChEBI" id="CHEBI:57540"/>
    </ligand>
</feature>
<feature type="binding site" description="in other chain" evidence="1">
    <location>
        <position position="296"/>
    </location>
    <ligand>
        <name>K(+)</name>
        <dbReference type="ChEBI" id="CHEBI:29103"/>
        <note>ligand shared between two tetrameric partners</note>
    </ligand>
</feature>
<feature type="binding site" description="in other chain" evidence="1">
    <location>
        <position position="298"/>
    </location>
    <ligand>
        <name>K(+)</name>
        <dbReference type="ChEBI" id="CHEBI:29103"/>
        <note>ligand shared between two tetrameric partners</note>
    </ligand>
</feature>
<feature type="binding site" evidence="1">
    <location>
        <position position="299"/>
    </location>
    <ligand>
        <name>IMP</name>
        <dbReference type="ChEBI" id="CHEBI:58053"/>
    </ligand>
</feature>
<feature type="binding site" description="in other chain" evidence="1">
    <location>
        <position position="301"/>
    </location>
    <ligand>
        <name>K(+)</name>
        <dbReference type="ChEBI" id="CHEBI:29103"/>
        <note>ligand shared between two tetrameric partners</note>
    </ligand>
</feature>
<feature type="binding site" evidence="1">
    <location>
        <begin position="334"/>
        <end position="336"/>
    </location>
    <ligand>
        <name>IMP</name>
        <dbReference type="ChEBI" id="CHEBI:58053"/>
    </ligand>
</feature>
<feature type="binding site" evidence="1">
    <location>
        <begin position="357"/>
        <end position="358"/>
    </location>
    <ligand>
        <name>IMP</name>
        <dbReference type="ChEBI" id="CHEBI:58053"/>
    </ligand>
</feature>
<feature type="binding site" evidence="1">
    <location>
        <begin position="381"/>
        <end position="385"/>
    </location>
    <ligand>
        <name>IMP</name>
        <dbReference type="ChEBI" id="CHEBI:58053"/>
    </ligand>
</feature>
<feature type="binding site" evidence="1">
    <location>
        <position position="412"/>
    </location>
    <ligand>
        <name>IMP</name>
        <dbReference type="ChEBI" id="CHEBI:58053"/>
    </ligand>
</feature>
<feature type="binding site" evidence="1">
    <location>
        <position position="466"/>
    </location>
    <ligand>
        <name>K(+)</name>
        <dbReference type="ChEBI" id="CHEBI:29103"/>
        <note>ligand shared between two tetrameric partners</note>
    </ligand>
</feature>
<feature type="binding site" evidence="1">
    <location>
        <position position="467"/>
    </location>
    <ligand>
        <name>K(+)</name>
        <dbReference type="ChEBI" id="CHEBI:29103"/>
        <note>ligand shared between two tetrameric partners</note>
    </ligand>
</feature>
<feature type="binding site" evidence="1">
    <location>
        <position position="468"/>
    </location>
    <ligand>
        <name>K(+)</name>
        <dbReference type="ChEBI" id="CHEBI:29103"/>
        <note>ligand shared between two tetrameric partners</note>
    </ligand>
</feature>
<name>IMDH_PYRAB</name>
<comment type="function">
    <text evidence="1">Catalyzes the conversion of inosine 5'-phosphate (IMP) to xanthosine 5'-phosphate (XMP), the first committed and rate-limiting step in the de novo synthesis of guanine nucleotides, and therefore plays an important role in the regulation of cell growth.</text>
</comment>
<comment type="catalytic activity">
    <reaction evidence="1">
        <text>IMP + NAD(+) + H2O = XMP + NADH + H(+)</text>
        <dbReference type="Rhea" id="RHEA:11708"/>
        <dbReference type="ChEBI" id="CHEBI:15377"/>
        <dbReference type="ChEBI" id="CHEBI:15378"/>
        <dbReference type="ChEBI" id="CHEBI:57464"/>
        <dbReference type="ChEBI" id="CHEBI:57540"/>
        <dbReference type="ChEBI" id="CHEBI:57945"/>
        <dbReference type="ChEBI" id="CHEBI:58053"/>
        <dbReference type="EC" id="1.1.1.205"/>
    </reaction>
</comment>
<comment type="cofactor">
    <cofactor evidence="1">
        <name>K(+)</name>
        <dbReference type="ChEBI" id="CHEBI:29103"/>
    </cofactor>
</comment>
<comment type="activity regulation">
    <text evidence="1">Mycophenolic acid (MPA) is a non-competitive inhibitor that prevents formation of the closed enzyme conformation by binding to the same site as the amobile flap. In contrast, mizoribine monophosphate (MZP) is a competitive inhibitor that induces the closed conformation. MPA is a potent inhibitor of mammalian IMPDHs but a poor inhibitor of the bacterial enzymes. MZP is a more potent inhibitor of bacterial IMPDH.</text>
</comment>
<comment type="pathway">
    <text evidence="1">Purine metabolism; XMP biosynthesis via de novo pathway; XMP from IMP: step 1/1.</text>
</comment>
<comment type="subunit">
    <text evidence="1">Homotetramer.</text>
</comment>
<comment type="similarity">
    <text evidence="1">Belongs to the IMPDH/GMPR family.</text>
</comment>
<accession>Q9UY49</accession>
<accession>G8ZK20</accession>
<organism>
    <name type="scientific">Pyrococcus abyssi (strain GE5 / Orsay)</name>
    <dbReference type="NCBI Taxonomy" id="272844"/>
    <lineage>
        <taxon>Archaea</taxon>
        <taxon>Methanobacteriati</taxon>
        <taxon>Methanobacteriota</taxon>
        <taxon>Thermococci</taxon>
        <taxon>Thermococcales</taxon>
        <taxon>Thermococcaceae</taxon>
        <taxon>Pyrococcus</taxon>
    </lineage>
</organism>
<reference key="1">
    <citation type="journal article" date="2003" name="Mol. Microbiol.">
        <title>An integrated analysis of the genome of the hyperthermophilic archaeon Pyrococcus abyssi.</title>
        <authorList>
            <person name="Cohen G.N."/>
            <person name="Barbe V."/>
            <person name="Flament D."/>
            <person name="Galperin M."/>
            <person name="Heilig R."/>
            <person name="Lecompte O."/>
            <person name="Poch O."/>
            <person name="Prieur D."/>
            <person name="Querellou J."/>
            <person name="Ripp R."/>
            <person name="Thierry J.-C."/>
            <person name="Van der Oost J."/>
            <person name="Weissenbach J."/>
            <person name="Zivanovic Y."/>
            <person name="Forterre P."/>
        </authorList>
    </citation>
    <scope>NUCLEOTIDE SEQUENCE [LARGE SCALE GENOMIC DNA]</scope>
    <source>
        <strain>GE5 / Orsay</strain>
    </source>
</reference>
<reference key="2">
    <citation type="journal article" date="2012" name="Curr. Microbiol.">
        <title>Re-annotation of two hyperthermophilic archaea Pyrococcus abyssi GE5 and Pyrococcus furiosus DSM 3638.</title>
        <authorList>
            <person name="Gao J."/>
            <person name="Wang J."/>
        </authorList>
    </citation>
    <scope>GENOME REANNOTATION</scope>
    <source>
        <strain>GE5 / Orsay</strain>
    </source>
</reference>
<gene>
    <name evidence="1" type="primary">guaB</name>
    <name type="ordered locus">PYRAB16590</name>
    <name type="ORF">PAB1250</name>
</gene>
<dbReference type="EC" id="1.1.1.205" evidence="1"/>
<dbReference type="EMBL" id="AJ248288">
    <property type="protein sequence ID" value="CAB50563.1"/>
    <property type="molecule type" value="Genomic_DNA"/>
</dbReference>
<dbReference type="EMBL" id="HE613800">
    <property type="protein sequence ID" value="CCE71127.1"/>
    <property type="molecule type" value="Genomic_DNA"/>
</dbReference>
<dbReference type="PIR" id="E75015">
    <property type="entry name" value="E75015"/>
</dbReference>
<dbReference type="RefSeq" id="WP_010868777.1">
    <property type="nucleotide sequence ID" value="NC_000868.1"/>
</dbReference>
<dbReference type="SMR" id="Q9UY49"/>
<dbReference type="STRING" id="272844.PAB1250"/>
<dbReference type="KEGG" id="pab:PAB1250"/>
<dbReference type="PATRIC" id="fig|272844.11.peg.1773"/>
<dbReference type="eggNOG" id="arCOG00612">
    <property type="taxonomic scope" value="Archaea"/>
</dbReference>
<dbReference type="HOGENOM" id="CLU_022552_2_1_2"/>
<dbReference type="OrthoDB" id="21361at2157"/>
<dbReference type="PhylomeDB" id="Q9UY49"/>
<dbReference type="UniPathway" id="UPA00601">
    <property type="reaction ID" value="UER00295"/>
</dbReference>
<dbReference type="Proteomes" id="UP000000810">
    <property type="component" value="Chromosome"/>
</dbReference>
<dbReference type="Proteomes" id="UP000009139">
    <property type="component" value="Chromosome"/>
</dbReference>
<dbReference type="GO" id="GO:0003938">
    <property type="term" value="F:IMP dehydrogenase activity"/>
    <property type="evidence" value="ECO:0007669"/>
    <property type="project" value="UniProtKB-UniRule"/>
</dbReference>
<dbReference type="GO" id="GO:0046872">
    <property type="term" value="F:metal ion binding"/>
    <property type="evidence" value="ECO:0007669"/>
    <property type="project" value="UniProtKB-UniRule"/>
</dbReference>
<dbReference type="GO" id="GO:0000166">
    <property type="term" value="F:nucleotide binding"/>
    <property type="evidence" value="ECO:0007669"/>
    <property type="project" value="UniProtKB-UniRule"/>
</dbReference>
<dbReference type="GO" id="GO:0006177">
    <property type="term" value="P:GMP biosynthetic process"/>
    <property type="evidence" value="ECO:0007669"/>
    <property type="project" value="UniProtKB-UniRule"/>
</dbReference>
<dbReference type="GO" id="GO:0006183">
    <property type="term" value="P:GTP biosynthetic process"/>
    <property type="evidence" value="ECO:0007669"/>
    <property type="project" value="TreeGrafter"/>
</dbReference>
<dbReference type="CDD" id="cd04601">
    <property type="entry name" value="CBS_pair_IMPDH"/>
    <property type="match status" value="1"/>
</dbReference>
<dbReference type="CDD" id="cd00381">
    <property type="entry name" value="IMPDH"/>
    <property type="match status" value="1"/>
</dbReference>
<dbReference type="FunFam" id="3.20.20.70:FF:000003">
    <property type="entry name" value="GMP reductase"/>
    <property type="match status" value="1"/>
</dbReference>
<dbReference type="Gene3D" id="3.20.20.70">
    <property type="entry name" value="Aldolase class I"/>
    <property type="match status" value="1"/>
</dbReference>
<dbReference type="HAMAP" id="MF_01964">
    <property type="entry name" value="IMPDH"/>
    <property type="match status" value="1"/>
</dbReference>
<dbReference type="InterPro" id="IPR013785">
    <property type="entry name" value="Aldolase_TIM"/>
</dbReference>
<dbReference type="InterPro" id="IPR000644">
    <property type="entry name" value="CBS_dom"/>
</dbReference>
<dbReference type="InterPro" id="IPR046342">
    <property type="entry name" value="CBS_dom_sf"/>
</dbReference>
<dbReference type="InterPro" id="IPR005990">
    <property type="entry name" value="IMP_DH"/>
</dbReference>
<dbReference type="InterPro" id="IPR015875">
    <property type="entry name" value="IMP_DH/GMP_Rdtase_CS"/>
</dbReference>
<dbReference type="InterPro" id="IPR001093">
    <property type="entry name" value="IMP_DH_GMPRt"/>
</dbReference>
<dbReference type="NCBIfam" id="TIGR01302">
    <property type="entry name" value="IMP_dehydrog"/>
    <property type="match status" value="1"/>
</dbReference>
<dbReference type="PANTHER" id="PTHR11911:SF111">
    <property type="entry name" value="INOSINE-5'-MONOPHOSPHATE DEHYDROGENASE"/>
    <property type="match status" value="1"/>
</dbReference>
<dbReference type="PANTHER" id="PTHR11911">
    <property type="entry name" value="INOSINE-5-MONOPHOSPHATE DEHYDROGENASE RELATED"/>
    <property type="match status" value="1"/>
</dbReference>
<dbReference type="Pfam" id="PF00571">
    <property type="entry name" value="CBS"/>
    <property type="match status" value="2"/>
</dbReference>
<dbReference type="Pfam" id="PF00478">
    <property type="entry name" value="IMPDH"/>
    <property type="match status" value="1"/>
</dbReference>
<dbReference type="PIRSF" id="PIRSF000130">
    <property type="entry name" value="IMPDH"/>
    <property type="match status" value="1"/>
</dbReference>
<dbReference type="SMART" id="SM00116">
    <property type="entry name" value="CBS"/>
    <property type="match status" value="2"/>
</dbReference>
<dbReference type="SMART" id="SM01240">
    <property type="entry name" value="IMPDH"/>
    <property type="match status" value="1"/>
</dbReference>
<dbReference type="SUPFAM" id="SSF54631">
    <property type="entry name" value="CBS-domain pair"/>
    <property type="match status" value="1"/>
</dbReference>
<dbReference type="SUPFAM" id="SSF51412">
    <property type="entry name" value="Inosine monophosphate dehydrogenase (IMPDH)"/>
    <property type="match status" value="1"/>
</dbReference>
<dbReference type="PROSITE" id="PS51371">
    <property type="entry name" value="CBS"/>
    <property type="match status" value="2"/>
</dbReference>
<dbReference type="PROSITE" id="PS00487">
    <property type="entry name" value="IMP_DH_GMP_RED"/>
    <property type="match status" value="1"/>
</dbReference>
<keyword id="KW-0129">CBS domain</keyword>
<keyword id="KW-0332">GMP biosynthesis</keyword>
<keyword id="KW-0479">Metal-binding</keyword>
<keyword id="KW-0520">NAD</keyword>
<keyword id="KW-0560">Oxidoreductase</keyword>
<keyword id="KW-0630">Potassium</keyword>
<keyword id="KW-0658">Purine biosynthesis</keyword>
<keyword id="KW-0677">Repeat</keyword>
<protein>
    <recommendedName>
        <fullName evidence="1">Inosine-5'-monophosphate dehydrogenase</fullName>
        <shortName evidence="1">IMP dehydrogenase</shortName>
        <shortName evidence="1">IMPD</shortName>
        <shortName evidence="1">IMPDH</shortName>
        <ecNumber evidence="1">1.1.1.205</ecNumber>
    </recommendedName>
</protein>